<comment type="function">
    <text evidence="5">Acts as an actin nucleation factor and promotes assembly of actin filaments together with spir. May play a role in intracellular vesicle transport along actin fibers, providing a novel link between actin cytoskeleton dynamics and intracellular transport.</text>
</comment>
<comment type="subunit">
    <text evidence="4 5">Interacts with wash. Interacts with spir.</text>
</comment>
<comment type="subcellular location">
    <subcellularLocation>
        <location evidence="1">Cytoplasm</location>
        <location evidence="1">Cytoskeleton</location>
    </subcellularLocation>
    <subcellularLocation>
        <location evidence="1">Cytoplasm</location>
        <location evidence="1">Cytosol</location>
    </subcellularLocation>
    <subcellularLocation>
        <location evidence="5">Membrane</location>
        <topology evidence="5">Peripheral membrane protein</topology>
        <orientation evidence="5">Cytoplasmic side</orientation>
    </subcellularLocation>
    <subcellularLocation>
        <location evidence="1">Cytoplasmic vesicle membrane</location>
        <topology evidence="1">Peripheral membrane protein</topology>
        <orientation evidence="1">Cytoplasmic side</orientation>
    </subcellularLocation>
    <text>Recruited to membranes via its interaction with spir.</text>
</comment>
<comment type="similarity">
    <text evidence="6">Belongs to the formin homology family. Cappuccino subfamily.</text>
</comment>
<accession>Q24120</accession>
<accession>Q9VQV8</accession>
<keyword id="KW-0009">Actin-binding</keyword>
<keyword id="KW-0963">Cytoplasm</keyword>
<keyword id="KW-0968">Cytoplasmic vesicle</keyword>
<keyword id="KW-0206">Cytoskeleton</keyword>
<keyword id="KW-0217">Developmental protein</keyword>
<keyword id="KW-0472">Membrane</keyword>
<keyword id="KW-0653">Protein transport</keyword>
<keyword id="KW-1185">Reference proteome</keyword>
<keyword id="KW-0346">Stress response</keyword>
<keyword id="KW-0813">Transport</keyword>
<name>CAPU_DROME</name>
<gene>
    <name type="primary">capu</name>
    <name type="ORF">CG3399</name>
</gene>
<evidence type="ECO:0000250" key="1"/>
<evidence type="ECO:0000255" key="2">
    <source>
        <dbReference type="PROSITE-ProRule" id="PRU00774"/>
    </source>
</evidence>
<evidence type="ECO:0000256" key="3">
    <source>
        <dbReference type="SAM" id="MobiDB-lite"/>
    </source>
</evidence>
<evidence type="ECO:0000269" key="4">
    <source>
    </source>
</evidence>
<evidence type="ECO:0000269" key="5">
    <source>
    </source>
</evidence>
<evidence type="ECO:0000305" key="6"/>
<proteinExistence type="evidence at protein level"/>
<sequence>MALQLGKKLAQVLGSGAGSPLTPGTMEPCAAGSGSPLANGELFNVSKAKKVELQNLSSRFTAAVTQTPPGVTSSTPNESGVTGPAGPLGATTSSPSLETQSTVIISFKSSQTPVQSQTNSAASENVEDDTAPLPLPPPPPGFGTPTTPLLSSNVLKKVASFTVEKSSAGNNSSNPPNLCPTSDETTLLATPCSSSLTVATLPPEIAVGAAAGGVAGGAGSRRGSSYVPEKLSFAAYEKFEGQMLIKWLISTMQSNPKSSSGDANQELFNTLALQFCNNLKYVGVLKQISNEHLDCGFSPYEMYQWTHTEQPTTSLPLTPGKLDKVAAWPFSSTPSGIRALESASLASLGAGGVAGSLATIATASTASSDNQKTLQQILKKRLLNCTTLAEVHAVVNELLSSVDEPPRRPSKRCVNLTELLNASEATVYEYNKTGAEGCVKSFTDAETQTESEDCEGTCKCGQSSTKVSDNESAKEDGEKPHAVAPPPPPPPPPLHAFVAPPPPPPPPPPPPPPLANYGAPPPPPPPPPGSGSAPPPPPPAPIEGGGGIPPPPPPMSASPSKTTISPAPLPDPAEGNWFHRTNTMRKSAVNPPKPMRPLYWTRIVTSAPPAPRPPSVANSTDSTENSGSSPDEPPAANGADAPPTAPPATKEIWTEIEETPLDNIDEFTELFSRQAIAPVSKPKELKVKRAKSIKVLDPERSRNVGIIWRSLHVPSSEIEHAIYHIDTSVVSLEALQHMSNIQATEDELQRIKEAAGGDIPLDHPEQFLLDISLISMASERISCIVFQAEFEESVTLLFRKLETVSQLSQQLIESEDLKLVFSIILTLGNYMNGGNRQRGQADGFNLDILGKLKDVKSKESHTTLLHFIVRTYIAQRRKEGVHPLEIRLPIPEPADVERAAQMDFEEVQQQIFDLNKKFLGCKRTTAKVLAASRPEIMEPFKSKMEEFVEGADKSMAKLHQSLDECRDLFLETMRFYHFSPKACTLTLAQCTPDQFFEYWTNFTNDFKDIWKKEITSLLNELMKKSKQAQIESRRNVSTKVEKSGRISLKERMLMRRSKN</sequence>
<dbReference type="EMBL" id="U34258">
    <property type="protein sequence ID" value="AAC46925.1"/>
    <property type="molecule type" value="mRNA"/>
</dbReference>
<dbReference type="EMBL" id="AE014134">
    <property type="protein sequence ID" value="AAF51054.1"/>
    <property type="molecule type" value="Genomic_DNA"/>
</dbReference>
<dbReference type="PIR" id="T13286">
    <property type="entry name" value="T13286"/>
</dbReference>
<dbReference type="RefSeq" id="NP_476966.1">
    <property type="nucleotide sequence ID" value="NM_057618.3"/>
</dbReference>
<dbReference type="SMR" id="Q24120"/>
<dbReference type="BioGRID" id="59814">
    <property type="interactions" value="12"/>
</dbReference>
<dbReference type="FunCoup" id="Q24120">
    <property type="interactions" value="70"/>
</dbReference>
<dbReference type="IntAct" id="Q24120">
    <property type="interactions" value="4"/>
</dbReference>
<dbReference type="STRING" id="7227.FBpp0288517"/>
<dbReference type="GlyGen" id="Q24120">
    <property type="glycosylation" value="1 site"/>
</dbReference>
<dbReference type="PaxDb" id="7227-FBpp0288517"/>
<dbReference type="DNASU" id="33611"/>
<dbReference type="EnsemblMetazoa" id="FBtr0077513">
    <property type="protein sequence ID" value="FBpp0077202"/>
    <property type="gene ID" value="FBgn0000256"/>
</dbReference>
<dbReference type="GeneID" id="33611"/>
<dbReference type="KEGG" id="dme:Dmel_CG3399"/>
<dbReference type="UCSC" id="CG3399-RA">
    <property type="organism name" value="d. melanogaster"/>
</dbReference>
<dbReference type="AGR" id="FB:FBgn0000256"/>
<dbReference type="CTD" id="33611"/>
<dbReference type="FlyBase" id="FBgn0000256">
    <property type="gene designation" value="capu"/>
</dbReference>
<dbReference type="VEuPathDB" id="VectorBase:FBgn0000256"/>
<dbReference type="eggNOG" id="KOG1922">
    <property type="taxonomic scope" value="Eukaryota"/>
</dbReference>
<dbReference type="GeneTree" id="ENSGT00940000165811"/>
<dbReference type="HOGENOM" id="CLU_006372_0_0_1"/>
<dbReference type="InParanoid" id="Q24120"/>
<dbReference type="OrthoDB" id="427644at2759"/>
<dbReference type="BioGRID-ORCS" id="33611">
    <property type="hits" value="0 hits in 3 CRISPR screens"/>
</dbReference>
<dbReference type="ChiTaRS" id="capu">
    <property type="organism name" value="fly"/>
</dbReference>
<dbReference type="GenomeRNAi" id="33611"/>
<dbReference type="PRO" id="PR:Q24120"/>
<dbReference type="Proteomes" id="UP000000803">
    <property type="component" value="Chromosome 2L"/>
</dbReference>
<dbReference type="Bgee" id="FBgn0000256">
    <property type="expression patterns" value="Expressed in leg muscle motor neuron in post-embryonic organism and 265 other cell types or tissues"/>
</dbReference>
<dbReference type="ExpressionAtlas" id="Q24120">
    <property type="expression patterns" value="baseline and differential"/>
</dbReference>
<dbReference type="GO" id="GO:0005884">
    <property type="term" value="C:actin filament"/>
    <property type="evidence" value="ECO:0007669"/>
    <property type="project" value="InterPro"/>
</dbReference>
<dbReference type="GO" id="GO:0005938">
    <property type="term" value="C:cell cortex"/>
    <property type="evidence" value="ECO:0000314"/>
    <property type="project" value="FlyBase"/>
</dbReference>
<dbReference type="GO" id="GO:0005737">
    <property type="term" value="C:cytoplasm"/>
    <property type="evidence" value="ECO:0000314"/>
    <property type="project" value="FlyBase"/>
</dbReference>
<dbReference type="GO" id="GO:0030659">
    <property type="term" value="C:cytoplasmic vesicle membrane"/>
    <property type="evidence" value="ECO:0007669"/>
    <property type="project" value="UniProtKB-SubCell"/>
</dbReference>
<dbReference type="GO" id="GO:0005829">
    <property type="term" value="C:cytosol"/>
    <property type="evidence" value="ECO:0007669"/>
    <property type="project" value="UniProtKB-SubCell"/>
</dbReference>
<dbReference type="GO" id="GO:0003779">
    <property type="term" value="F:actin binding"/>
    <property type="evidence" value="ECO:0007669"/>
    <property type="project" value="UniProtKB-KW"/>
</dbReference>
<dbReference type="GO" id="GO:0008017">
    <property type="term" value="F:microtubule binding"/>
    <property type="evidence" value="ECO:0000314"/>
    <property type="project" value="FlyBase"/>
</dbReference>
<dbReference type="GO" id="GO:0030036">
    <property type="term" value="P:actin cytoskeleton organization"/>
    <property type="evidence" value="ECO:0000318"/>
    <property type="project" value="GO_Central"/>
</dbReference>
<dbReference type="GO" id="GO:0007015">
    <property type="term" value="P:actin filament organization"/>
    <property type="evidence" value="ECO:0000315"/>
    <property type="project" value="FlyBase"/>
</dbReference>
<dbReference type="GO" id="GO:0030029">
    <property type="term" value="P:actin filament-based process"/>
    <property type="evidence" value="ECO:0000314"/>
    <property type="project" value="FlyBase"/>
</dbReference>
<dbReference type="GO" id="GO:0045010">
    <property type="term" value="P:actin nucleation"/>
    <property type="evidence" value="ECO:0000314"/>
    <property type="project" value="FlyBase"/>
</dbReference>
<dbReference type="GO" id="GO:0007304">
    <property type="term" value="P:chorion-containing eggshell formation"/>
    <property type="evidence" value="ECO:0007001"/>
    <property type="project" value="FlyBase"/>
</dbReference>
<dbReference type="GO" id="GO:0048477">
    <property type="term" value="P:oogenesis"/>
    <property type="evidence" value="ECO:0000315"/>
    <property type="project" value="FlyBase"/>
</dbReference>
<dbReference type="GO" id="GO:0007315">
    <property type="term" value="P:pole plasm assembly"/>
    <property type="evidence" value="ECO:0000315"/>
    <property type="project" value="FlyBase"/>
</dbReference>
<dbReference type="GO" id="GO:0045451">
    <property type="term" value="P:pole plasm oskar mRNA localization"/>
    <property type="evidence" value="ECO:0000304"/>
    <property type="project" value="FlyBase"/>
</dbReference>
<dbReference type="GO" id="GO:0007316">
    <property type="term" value="P:pole plasm RNA localization"/>
    <property type="evidence" value="ECO:0000315"/>
    <property type="project" value="FlyBase"/>
</dbReference>
<dbReference type="GO" id="GO:0015031">
    <property type="term" value="P:protein transport"/>
    <property type="evidence" value="ECO:0007669"/>
    <property type="project" value="UniProtKB-KW"/>
</dbReference>
<dbReference type="Gene3D" id="1.20.58.2220">
    <property type="entry name" value="Formin, FH2 domain"/>
    <property type="match status" value="1"/>
</dbReference>
<dbReference type="InterPro" id="IPR015425">
    <property type="entry name" value="FH2_Formin"/>
</dbReference>
<dbReference type="InterPro" id="IPR042201">
    <property type="entry name" value="FH2_Formin_sf"/>
</dbReference>
<dbReference type="InterPro" id="IPR001265">
    <property type="entry name" value="Formin_Cappuccino_subfam"/>
</dbReference>
<dbReference type="PANTHER" id="PTHR45920">
    <property type="entry name" value="FORMIN HOMOLOGY 2 DOMAIN CONTAINING, ISOFORM I"/>
    <property type="match status" value="1"/>
</dbReference>
<dbReference type="PANTHER" id="PTHR45920:SF7">
    <property type="entry name" value="FORMIN-G"/>
    <property type="match status" value="1"/>
</dbReference>
<dbReference type="Pfam" id="PF02181">
    <property type="entry name" value="FH2"/>
    <property type="match status" value="1"/>
</dbReference>
<dbReference type="PRINTS" id="PR00828">
    <property type="entry name" value="FORMIN"/>
</dbReference>
<dbReference type="SMART" id="SM00498">
    <property type="entry name" value="FH2"/>
    <property type="match status" value="1"/>
</dbReference>
<dbReference type="SUPFAM" id="SSF101447">
    <property type="entry name" value="Formin homology 2 domain (FH2 domain)"/>
    <property type="match status" value="1"/>
</dbReference>
<dbReference type="PROSITE" id="PS51444">
    <property type="entry name" value="FH2"/>
    <property type="match status" value="1"/>
</dbReference>
<protein>
    <recommendedName>
        <fullName>Protein cappuccino</fullName>
    </recommendedName>
</protein>
<feature type="chain" id="PRO_0000194884" description="Protein cappuccino">
    <location>
        <begin position="1"/>
        <end position="1059"/>
    </location>
</feature>
<feature type="domain" description="FH1">
    <location>
        <begin position="480"/>
        <end position="560"/>
    </location>
</feature>
<feature type="domain" description="FH2" evidence="2">
    <location>
        <begin position="585"/>
        <end position="1032"/>
    </location>
</feature>
<feature type="region of interest" description="Disordered" evidence="3">
    <location>
        <begin position="62"/>
        <end position="146"/>
    </location>
</feature>
<feature type="region of interest" description="Disordered" evidence="3">
    <location>
        <begin position="448"/>
        <end position="647"/>
    </location>
</feature>
<feature type="region of interest" description="Important for interaction with spir">
    <location>
        <begin position="1049"/>
        <end position="1059"/>
    </location>
</feature>
<feature type="compositionally biased region" description="Polar residues" evidence="3">
    <location>
        <begin position="62"/>
        <end position="80"/>
    </location>
</feature>
<feature type="compositionally biased region" description="Polar residues" evidence="3">
    <location>
        <begin position="90"/>
        <end position="123"/>
    </location>
</feature>
<feature type="compositionally biased region" description="Pro residues" evidence="3">
    <location>
        <begin position="133"/>
        <end position="142"/>
    </location>
</feature>
<feature type="compositionally biased region" description="Basic and acidic residues" evidence="3">
    <location>
        <begin position="468"/>
        <end position="481"/>
    </location>
</feature>
<feature type="compositionally biased region" description="Pro residues" evidence="3">
    <location>
        <begin position="483"/>
        <end position="541"/>
    </location>
</feature>
<feature type="compositionally biased region" description="Polar residues" evidence="3">
    <location>
        <begin position="620"/>
        <end position="629"/>
    </location>
</feature>
<feature type="mutagenesis site" description="Abolishes interaction with spir." evidence="5">
    <original>K</original>
    <variation>A</variation>
    <variation>D</variation>
    <location>
        <position position="1049"/>
    </location>
</feature>
<feature type="mutagenesis site" description="Abolishes interaction with spir." evidence="5">
    <original>R</original>
    <variation>A</variation>
    <variation>D</variation>
    <location>
        <position position="1051"/>
    </location>
</feature>
<feature type="mutagenesis site" description="Abolishes interaction with spir." evidence="5">
    <original>R</original>
    <variation>A</variation>
    <variation>D</variation>
    <location>
        <position position="1055"/>
    </location>
</feature>
<feature type="sequence conflict" description="In Ref. 1; AAC46925." evidence="6" ref="1">
    <original>S</original>
    <variation>C</variation>
    <location>
        <position position="260"/>
    </location>
</feature>
<feature type="sequence conflict" description="In Ref. 1; AAC46925." evidence="6" ref="1">
    <original>S</original>
    <variation>T</variation>
    <location>
        <position position="364"/>
    </location>
</feature>
<feature type="sequence conflict" description="In Ref. 1; AAC46925." evidence="6" ref="1">
    <original>T</original>
    <variation>S</variation>
    <location>
        <position position="386"/>
    </location>
</feature>
<feature type="sequence conflict" description="In Ref. 1; AAC46925." evidence="6" ref="1">
    <original>E</original>
    <variation>K</variation>
    <location>
        <position position="471"/>
    </location>
</feature>
<feature type="sequence conflict" description="In Ref. 1; AAC46925." evidence="6" ref="1">
    <original>H</original>
    <variation>P</variation>
    <location>
        <position position="495"/>
    </location>
</feature>
<feature type="sequence conflict" description="In Ref. 1; AAC46925." evidence="6" ref="1">
    <location>
        <position position="513"/>
    </location>
</feature>
<organism>
    <name type="scientific">Drosophila melanogaster</name>
    <name type="common">Fruit fly</name>
    <dbReference type="NCBI Taxonomy" id="7227"/>
    <lineage>
        <taxon>Eukaryota</taxon>
        <taxon>Metazoa</taxon>
        <taxon>Ecdysozoa</taxon>
        <taxon>Arthropoda</taxon>
        <taxon>Hexapoda</taxon>
        <taxon>Insecta</taxon>
        <taxon>Pterygota</taxon>
        <taxon>Neoptera</taxon>
        <taxon>Endopterygota</taxon>
        <taxon>Diptera</taxon>
        <taxon>Brachycera</taxon>
        <taxon>Muscomorpha</taxon>
        <taxon>Ephydroidea</taxon>
        <taxon>Drosophilidae</taxon>
        <taxon>Drosophila</taxon>
        <taxon>Sophophora</taxon>
    </lineage>
</organism>
<reference key="1">
    <citation type="journal article" date="1995" name="Genes Dev.">
        <title>Cappuccino, a Drosophila maternal effect gene required for polarity of the egg and embryo, is related to the vertebrate limb deformity locus.</title>
        <authorList>
            <person name="Emmons S."/>
            <person name="Phan H."/>
            <person name="Calley J."/>
            <person name="Chen W."/>
            <person name="James B."/>
            <person name="Manseau L."/>
        </authorList>
    </citation>
    <scope>NUCLEOTIDE SEQUENCE [MRNA]</scope>
    <source>
        <tissue>Ovary</tissue>
    </source>
</reference>
<reference key="2">
    <citation type="journal article" date="2000" name="Science">
        <title>The genome sequence of Drosophila melanogaster.</title>
        <authorList>
            <person name="Adams M.D."/>
            <person name="Celniker S.E."/>
            <person name="Holt R.A."/>
            <person name="Evans C.A."/>
            <person name="Gocayne J.D."/>
            <person name="Amanatides P.G."/>
            <person name="Scherer S.E."/>
            <person name="Li P.W."/>
            <person name="Hoskins R.A."/>
            <person name="Galle R.F."/>
            <person name="George R.A."/>
            <person name="Lewis S.E."/>
            <person name="Richards S."/>
            <person name="Ashburner M."/>
            <person name="Henderson S.N."/>
            <person name="Sutton G.G."/>
            <person name="Wortman J.R."/>
            <person name="Yandell M.D."/>
            <person name="Zhang Q."/>
            <person name="Chen L.X."/>
            <person name="Brandon R.C."/>
            <person name="Rogers Y.-H.C."/>
            <person name="Blazej R.G."/>
            <person name="Champe M."/>
            <person name="Pfeiffer B.D."/>
            <person name="Wan K.H."/>
            <person name="Doyle C."/>
            <person name="Baxter E.G."/>
            <person name="Helt G."/>
            <person name="Nelson C.R."/>
            <person name="Miklos G.L.G."/>
            <person name="Abril J.F."/>
            <person name="Agbayani A."/>
            <person name="An H.-J."/>
            <person name="Andrews-Pfannkoch C."/>
            <person name="Baldwin D."/>
            <person name="Ballew R.M."/>
            <person name="Basu A."/>
            <person name="Baxendale J."/>
            <person name="Bayraktaroglu L."/>
            <person name="Beasley E.M."/>
            <person name="Beeson K.Y."/>
            <person name="Benos P.V."/>
            <person name="Berman B.P."/>
            <person name="Bhandari D."/>
            <person name="Bolshakov S."/>
            <person name="Borkova D."/>
            <person name="Botchan M.R."/>
            <person name="Bouck J."/>
            <person name="Brokstein P."/>
            <person name="Brottier P."/>
            <person name="Burtis K.C."/>
            <person name="Busam D.A."/>
            <person name="Butler H."/>
            <person name="Cadieu E."/>
            <person name="Center A."/>
            <person name="Chandra I."/>
            <person name="Cherry J.M."/>
            <person name="Cawley S."/>
            <person name="Dahlke C."/>
            <person name="Davenport L.B."/>
            <person name="Davies P."/>
            <person name="de Pablos B."/>
            <person name="Delcher A."/>
            <person name="Deng Z."/>
            <person name="Mays A.D."/>
            <person name="Dew I."/>
            <person name="Dietz S.M."/>
            <person name="Dodson K."/>
            <person name="Doup L.E."/>
            <person name="Downes M."/>
            <person name="Dugan-Rocha S."/>
            <person name="Dunkov B.C."/>
            <person name="Dunn P."/>
            <person name="Durbin K.J."/>
            <person name="Evangelista C.C."/>
            <person name="Ferraz C."/>
            <person name="Ferriera S."/>
            <person name="Fleischmann W."/>
            <person name="Fosler C."/>
            <person name="Gabrielian A.E."/>
            <person name="Garg N.S."/>
            <person name="Gelbart W.M."/>
            <person name="Glasser K."/>
            <person name="Glodek A."/>
            <person name="Gong F."/>
            <person name="Gorrell J.H."/>
            <person name="Gu Z."/>
            <person name="Guan P."/>
            <person name="Harris M."/>
            <person name="Harris N.L."/>
            <person name="Harvey D.A."/>
            <person name="Heiman T.J."/>
            <person name="Hernandez J.R."/>
            <person name="Houck J."/>
            <person name="Hostin D."/>
            <person name="Houston K.A."/>
            <person name="Howland T.J."/>
            <person name="Wei M.-H."/>
            <person name="Ibegwam C."/>
            <person name="Jalali M."/>
            <person name="Kalush F."/>
            <person name="Karpen G.H."/>
            <person name="Ke Z."/>
            <person name="Kennison J.A."/>
            <person name="Ketchum K.A."/>
            <person name="Kimmel B.E."/>
            <person name="Kodira C.D."/>
            <person name="Kraft C.L."/>
            <person name="Kravitz S."/>
            <person name="Kulp D."/>
            <person name="Lai Z."/>
            <person name="Lasko P."/>
            <person name="Lei Y."/>
            <person name="Levitsky A.A."/>
            <person name="Li J.H."/>
            <person name="Li Z."/>
            <person name="Liang Y."/>
            <person name="Lin X."/>
            <person name="Liu X."/>
            <person name="Mattei B."/>
            <person name="McIntosh T.C."/>
            <person name="McLeod M.P."/>
            <person name="McPherson D."/>
            <person name="Merkulov G."/>
            <person name="Milshina N.V."/>
            <person name="Mobarry C."/>
            <person name="Morris J."/>
            <person name="Moshrefi A."/>
            <person name="Mount S.M."/>
            <person name="Moy M."/>
            <person name="Murphy B."/>
            <person name="Murphy L."/>
            <person name="Muzny D.M."/>
            <person name="Nelson D.L."/>
            <person name="Nelson D.R."/>
            <person name="Nelson K.A."/>
            <person name="Nixon K."/>
            <person name="Nusskern D.R."/>
            <person name="Pacleb J.M."/>
            <person name="Palazzolo M."/>
            <person name="Pittman G.S."/>
            <person name="Pan S."/>
            <person name="Pollard J."/>
            <person name="Puri V."/>
            <person name="Reese M.G."/>
            <person name="Reinert K."/>
            <person name="Remington K."/>
            <person name="Saunders R.D.C."/>
            <person name="Scheeler F."/>
            <person name="Shen H."/>
            <person name="Shue B.C."/>
            <person name="Siden-Kiamos I."/>
            <person name="Simpson M."/>
            <person name="Skupski M.P."/>
            <person name="Smith T.J."/>
            <person name="Spier E."/>
            <person name="Spradling A.C."/>
            <person name="Stapleton M."/>
            <person name="Strong R."/>
            <person name="Sun E."/>
            <person name="Svirskas R."/>
            <person name="Tector C."/>
            <person name="Turner R."/>
            <person name="Venter E."/>
            <person name="Wang A.H."/>
            <person name="Wang X."/>
            <person name="Wang Z.-Y."/>
            <person name="Wassarman D.A."/>
            <person name="Weinstock G.M."/>
            <person name="Weissenbach J."/>
            <person name="Williams S.M."/>
            <person name="Woodage T."/>
            <person name="Worley K.C."/>
            <person name="Wu D."/>
            <person name="Yang S."/>
            <person name="Yao Q.A."/>
            <person name="Ye J."/>
            <person name="Yeh R.-F."/>
            <person name="Zaveri J.S."/>
            <person name="Zhan M."/>
            <person name="Zhang G."/>
            <person name="Zhao Q."/>
            <person name="Zheng L."/>
            <person name="Zheng X.H."/>
            <person name="Zhong F.N."/>
            <person name="Zhong W."/>
            <person name="Zhou X."/>
            <person name="Zhu S.C."/>
            <person name="Zhu X."/>
            <person name="Smith H.O."/>
            <person name="Gibbs R.A."/>
            <person name="Myers E.W."/>
            <person name="Rubin G.M."/>
            <person name="Venter J.C."/>
        </authorList>
    </citation>
    <scope>NUCLEOTIDE SEQUENCE [LARGE SCALE GENOMIC DNA]</scope>
    <source>
        <strain>Berkeley</strain>
    </source>
</reference>
<reference key="3">
    <citation type="journal article" date="2002" name="Genome Biol.">
        <title>Annotation of the Drosophila melanogaster euchromatic genome: a systematic review.</title>
        <authorList>
            <person name="Misra S."/>
            <person name="Crosby M.A."/>
            <person name="Mungall C.J."/>
            <person name="Matthews B.B."/>
            <person name="Campbell K.S."/>
            <person name="Hradecky P."/>
            <person name="Huang Y."/>
            <person name="Kaminker J.S."/>
            <person name="Millburn G.H."/>
            <person name="Prochnik S.E."/>
            <person name="Smith C.D."/>
            <person name="Tupy J.L."/>
            <person name="Whitfield E.J."/>
            <person name="Bayraktaroglu L."/>
            <person name="Berman B.P."/>
            <person name="Bettencourt B.R."/>
            <person name="Celniker S.E."/>
            <person name="de Grey A.D.N.J."/>
            <person name="Drysdale R.A."/>
            <person name="Harris N.L."/>
            <person name="Richter J."/>
            <person name="Russo S."/>
            <person name="Schroeder A.J."/>
            <person name="Shu S.Q."/>
            <person name="Stapleton M."/>
            <person name="Yamada C."/>
            <person name="Ashburner M."/>
            <person name="Gelbart W.M."/>
            <person name="Rubin G.M."/>
            <person name="Lewis S.E."/>
        </authorList>
    </citation>
    <scope>GENOME REANNOTATION</scope>
    <source>
        <strain>Berkeley</strain>
    </source>
</reference>
<reference key="4">
    <citation type="journal article" date="2009" name="Development">
        <title>Wash functions downstream of Rho and links linear and branched actin nucleation factors.</title>
        <authorList>
            <person name="Liu R."/>
            <person name="Abreu-Blanco M.T."/>
            <person name="Barry K.C."/>
            <person name="Linardopoulou E.V."/>
            <person name="Osborn G.E."/>
            <person name="Parkhurst S.M."/>
        </authorList>
    </citation>
    <scope>INTERACTION WITH WASH</scope>
</reference>
<reference key="5">
    <citation type="journal article" date="2011" name="Proc. Natl. Acad. Sci. U.S.A.">
        <title>Structure and function of the interacting domains of Spire and Fmn-family formins.</title>
        <authorList>
            <person name="Vizcarra C.L."/>
            <person name="Kreutz B."/>
            <person name="Rodal A.A."/>
            <person name="Toms A.V."/>
            <person name="Lu J."/>
            <person name="Zheng W."/>
            <person name="Quinlan M.E."/>
            <person name="Eck M.J."/>
        </authorList>
    </citation>
    <scope>FUNCTION</scope>
    <scope>INTERACTION WITH SPIR</scope>
    <scope>SUBCELLULAR LOCATION</scope>
    <scope>MUTAGENESIS OF LYS-1049; ARG-1051 AND ARG-1055</scope>
</reference>